<evidence type="ECO:0000250" key="1"/>
<name>XEN2_XENLA</name>
<feature type="chain" id="PRO_0000190096" description="Xenoxin-2">
    <location>
        <begin position="1"/>
        <end position="66"/>
    </location>
</feature>
<feature type="disulfide bond" evidence="1">
    <location>
        <begin position="3"/>
        <end position="24"/>
    </location>
</feature>
<feature type="disulfide bond" evidence="1">
    <location>
        <begin position="17"/>
        <end position="37"/>
    </location>
</feature>
<feature type="disulfide bond" evidence="1">
    <location>
        <begin position="43"/>
        <end position="58"/>
    </location>
</feature>
<feature type="disulfide bond" evidence="1">
    <location>
        <begin position="59"/>
        <end position="64"/>
    </location>
</feature>
<dbReference type="SMR" id="P38951"/>
<dbReference type="Proteomes" id="UP000186698">
    <property type="component" value="Unplaced"/>
</dbReference>
<dbReference type="GO" id="GO:0005576">
    <property type="term" value="C:extracellular region"/>
    <property type="evidence" value="ECO:0007669"/>
    <property type="project" value="UniProtKB-SubCell"/>
</dbReference>
<dbReference type="GO" id="GO:0006952">
    <property type="term" value="P:defense response"/>
    <property type="evidence" value="ECO:0007669"/>
    <property type="project" value="UniProtKB-KW"/>
</dbReference>
<dbReference type="FunFam" id="2.10.60.10:FF:000042">
    <property type="entry name" value="Pre-xenoxin-1"/>
    <property type="match status" value="1"/>
</dbReference>
<dbReference type="Gene3D" id="2.10.60.10">
    <property type="entry name" value="CD59"/>
    <property type="match status" value="1"/>
</dbReference>
<dbReference type="InterPro" id="IPR045860">
    <property type="entry name" value="Snake_toxin-like_sf"/>
</dbReference>
<dbReference type="SUPFAM" id="SSF57302">
    <property type="entry name" value="Snake toxin-like"/>
    <property type="match status" value="1"/>
</dbReference>
<proteinExistence type="evidence at protein level"/>
<sequence>LKCVNLQANGIKMTQECAKEDNKCLTLRSLKKTLKFCASDRICKTMKIMSLPGEKITCCEGNMCNA</sequence>
<keyword id="KW-0878">Amphibian defense peptide</keyword>
<keyword id="KW-0903">Direct protein sequencing</keyword>
<keyword id="KW-1015">Disulfide bond</keyword>
<keyword id="KW-1185">Reference proteome</keyword>
<keyword id="KW-0964">Secreted</keyword>
<organism>
    <name type="scientific">Xenopus laevis</name>
    <name type="common">African clawed frog</name>
    <dbReference type="NCBI Taxonomy" id="8355"/>
    <lineage>
        <taxon>Eukaryota</taxon>
        <taxon>Metazoa</taxon>
        <taxon>Chordata</taxon>
        <taxon>Craniata</taxon>
        <taxon>Vertebrata</taxon>
        <taxon>Euteleostomi</taxon>
        <taxon>Amphibia</taxon>
        <taxon>Batrachia</taxon>
        <taxon>Anura</taxon>
        <taxon>Pipoidea</taxon>
        <taxon>Pipidae</taxon>
        <taxon>Xenopodinae</taxon>
        <taxon>Xenopus</taxon>
        <taxon>Xenopus</taxon>
    </lineage>
</organism>
<protein>
    <recommendedName>
        <fullName>Xenoxin-2</fullName>
    </recommendedName>
</protein>
<comment type="function">
    <text>Lacks alpha-neurotoxic activity, has apparently no antibacterial activity, nor anti-coagulant potency.</text>
</comment>
<comment type="subcellular location">
    <subcellularLocation>
        <location>Secreted</location>
    </subcellularLocation>
</comment>
<comment type="tissue specificity">
    <text>Expressed by the skin dorsal glands.</text>
</comment>
<accession>P38951</accession>
<reference key="1">
    <citation type="journal article" date="1993" name="J. Biol. Chem.">
        <title>Xenoxins, a family of peptides from dorsal gland secretion of Xenopus laevis related to snake venom cytotoxins and neurotoxins.</title>
        <authorList>
            <person name="Kolbe H.V.J."/>
            <person name="Huber A."/>
            <person name="Cordier P."/>
            <person name="Rasmussen U.B."/>
            <person name="Bouchon B."/>
            <person name="Jaquinod M."/>
            <person name="Vlasak R."/>
            <person name="Delot E.C."/>
            <person name="Kreil G."/>
        </authorList>
    </citation>
    <scope>PROTEIN SEQUENCE</scope>
    <source>
        <tissue>Skin secretion</tissue>
    </source>
</reference>